<reference key="1">
    <citation type="journal article" date="2002" name="Nature">
        <title>The genome sequence of Schizosaccharomyces pombe.</title>
        <authorList>
            <person name="Wood V."/>
            <person name="Gwilliam R."/>
            <person name="Rajandream M.A."/>
            <person name="Lyne M.H."/>
            <person name="Lyne R."/>
            <person name="Stewart A."/>
            <person name="Sgouros J.G."/>
            <person name="Peat N."/>
            <person name="Hayles J."/>
            <person name="Baker S.G."/>
            <person name="Basham D."/>
            <person name="Bowman S."/>
            <person name="Brooks K."/>
            <person name="Brown D."/>
            <person name="Brown S."/>
            <person name="Chillingworth T."/>
            <person name="Churcher C.M."/>
            <person name="Collins M."/>
            <person name="Connor R."/>
            <person name="Cronin A."/>
            <person name="Davis P."/>
            <person name="Feltwell T."/>
            <person name="Fraser A."/>
            <person name="Gentles S."/>
            <person name="Goble A."/>
            <person name="Hamlin N."/>
            <person name="Harris D.E."/>
            <person name="Hidalgo J."/>
            <person name="Hodgson G."/>
            <person name="Holroyd S."/>
            <person name="Hornsby T."/>
            <person name="Howarth S."/>
            <person name="Huckle E.J."/>
            <person name="Hunt S."/>
            <person name="Jagels K."/>
            <person name="James K.D."/>
            <person name="Jones L."/>
            <person name="Jones M."/>
            <person name="Leather S."/>
            <person name="McDonald S."/>
            <person name="McLean J."/>
            <person name="Mooney P."/>
            <person name="Moule S."/>
            <person name="Mungall K.L."/>
            <person name="Murphy L.D."/>
            <person name="Niblett D."/>
            <person name="Odell C."/>
            <person name="Oliver K."/>
            <person name="O'Neil S."/>
            <person name="Pearson D."/>
            <person name="Quail M.A."/>
            <person name="Rabbinowitsch E."/>
            <person name="Rutherford K.M."/>
            <person name="Rutter S."/>
            <person name="Saunders D."/>
            <person name="Seeger K."/>
            <person name="Sharp S."/>
            <person name="Skelton J."/>
            <person name="Simmonds M.N."/>
            <person name="Squares R."/>
            <person name="Squares S."/>
            <person name="Stevens K."/>
            <person name="Taylor K."/>
            <person name="Taylor R.G."/>
            <person name="Tivey A."/>
            <person name="Walsh S.V."/>
            <person name="Warren T."/>
            <person name="Whitehead S."/>
            <person name="Woodward J.R."/>
            <person name="Volckaert G."/>
            <person name="Aert R."/>
            <person name="Robben J."/>
            <person name="Grymonprez B."/>
            <person name="Weltjens I."/>
            <person name="Vanstreels E."/>
            <person name="Rieger M."/>
            <person name="Schaefer M."/>
            <person name="Mueller-Auer S."/>
            <person name="Gabel C."/>
            <person name="Fuchs M."/>
            <person name="Duesterhoeft A."/>
            <person name="Fritzc C."/>
            <person name="Holzer E."/>
            <person name="Moestl D."/>
            <person name="Hilbert H."/>
            <person name="Borzym K."/>
            <person name="Langer I."/>
            <person name="Beck A."/>
            <person name="Lehrach H."/>
            <person name="Reinhardt R."/>
            <person name="Pohl T.M."/>
            <person name="Eger P."/>
            <person name="Zimmermann W."/>
            <person name="Wedler H."/>
            <person name="Wambutt R."/>
            <person name="Purnelle B."/>
            <person name="Goffeau A."/>
            <person name="Cadieu E."/>
            <person name="Dreano S."/>
            <person name="Gloux S."/>
            <person name="Lelaure V."/>
            <person name="Mottier S."/>
            <person name="Galibert F."/>
            <person name="Aves S.J."/>
            <person name="Xiang Z."/>
            <person name="Hunt C."/>
            <person name="Moore K."/>
            <person name="Hurst S.M."/>
            <person name="Lucas M."/>
            <person name="Rochet M."/>
            <person name="Gaillardin C."/>
            <person name="Tallada V.A."/>
            <person name="Garzon A."/>
            <person name="Thode G."/>
            <person name="Daga R.R."/>
            <person name="Cruzado L."/>
            <person name="Jimenez J."/>
            <person name="Sanchez M."/>
            <person name="del Rey F."/>
            <person name="Benito J."/>
            <person name="Dominguez A."/>
            <person name="Revuelta J.L."/>
            <person name="Moreno S."/>
            <person name="Armstrong J."/>
            <person name="Forsburg S.L."/>
            <person name="Cerutti L."/>
            <person name="Lowe T."/>
            <person name="McCombie W.R."/>
            <person name="Paulsen I."/>
            <person name="Potashkin J."/>
            <person name="Shpakovski G.V."/>
            <person name="Ussery D."/>
            <person name="Barrell B.G."/>
            <person name="Nurse P."/>
        </authorList>
    </citation>
    <scope>NUCLEOTIDE SEQUENCE [LARGE SCALE GENOMIC DNA]</scope>
    <source>
        <strain>972 / ATCC 24843</strain>
    </source>
</reference>
<gene>
    <name type="primary">bos1</name>
    <name type="ORF">SPAP14E8.03</name>
</gene>
<dbReference type="EMBL" id="CU329670">
    <property type="protein sequence ID" value="CAB77004.1"/>
    <property type="molecule type" value="Genomic_DNA"/>
</dbReference>
<dbReference type="RefSeq" id="NP_593539.1">
    <property type="nucleotide sequence ID" value="NM_001018973.2"/>
</dbReference>
<dbReference type="SMR" id="Q9P7G5"/>
<dbReference type="FunCoup" id="Q9P7G5">
    <property type="interactions" value="642"/>
</dbReference>
<dbReference type="STRING" id="284812.Q9P7G5"/>
<dbReference type="iPTMnet" id="Q9P7G5"/>
<dbReference type="PaxDb" id="4896-SPAP14E8.03.1"/>
<dbReference type="EnsemblFungi" id="SPAP14E8.03.1">
    <property type="protein sequence ID" value="SPAP14E8.03.1:pep"/>
    <property type="gene ID" value="SPAP14E8.03"/>
</dbReference>
<dbReference type="GeneID" id="2541965"/>
<dbReference type="KEGG" id="spo:2541965"/>
<dbReference type="PomBase" id="SPAP14E8.03">
    <property type="gene designation" value="bos1"/>
</dbReference>
<dbReference type="VEuPathDB" id="FungiDB:SPAP14E8.03"/>
<dbReference type="eggNOG" id="KOG3251">
    <property type="taxonomic scope" value="Eukaryota"/>
</dbReference>
<dbReference type="HOGENOM" id="CLU_078260_1_0_1"/>
<dbReference type="InParanoid" id="Q9P7G5"/>
<dbReference type="OMA" id="FCWLVIH"/>
<dbReference type="PhylomeDB" id="Q9P7G5"/>
<dbReference type="Reactome" id="R-SPO-204005">
    <property type="pathway name" value="COPII-mediated vesicle transport"/>
</dbReference>
<dbReference type="Reactome" id="R-SPO-5694530">
    <property type="pathway name" value="Cargo concentration in the ER"/>
</dbReference>
<dbReference type="Reactome" id="R-SPO-6807878">
    <property type="pathway name" value="COPI-mediated anterograde transport"/>
</dbReference>
<dbReference type="PRO" id="PR:Q9P7G5"/>
<dbReference type="Proteomes" id="UP000002485">
    <property type="component" value="Chromosome I"/>
</dbReference>
<dbReference type="GO" id="GO:0005737">
    <property type="term" value="C:cytoplasm"/>
    <property type="evidence" value="ECO:0007005"/>
    <property type="project" value="PomBase"/>
</dbReference>
<dbReference type="GO" id="GO:0005789">
    <property type="term" value="C:endoplasmic reticulum membrane"/>
    <property type="evidence" value="ECO:0000318"/>
    <property type="project" value="GO_Central"/>
</dbReference>
<dbReference type="GO" id="GO:0012507">
    <property type="term" value="C:ER to Golgi transport vesicle membrane"/>
    <property type="evidence" value="ECO:0000318"/>
    <property type="project" value="GO_Central"/>
</dbReference>
<dbReference type="GO" id="GO:0005794">
    <property type="term" value="C:Golgi apparatus"/>
    <property type="evidence" value="ECO:0007005"/>
    <property type="project" value="PomBase"/>
</dbReference>
<dbReference type="GO" id="GO:0000139">
    <property type="term" value="C:Golgi membrane"/>
    <property type="evidence" value="ECO:0007669"/>
    <property type="project" value="UniProtKB-SubCell"/>
</dbReference>
<dbReference type="GO" id="GO:0031902">
    <property type="term" value="C:late endosome membrane"/>
    <property type="evidence" value="ECO:0000318"/>
    <property type="project" value="GO_Central"/>
</dbReference>
<dbReference type="GO" id="GO:0031201">
    <property type="term" value="C:SNARE complex"/>
    <property type="evidence" value="ECO:0000318"/>
    <property type="project" value="GO_Central"/>
</dbReference>
<dbReference type="GO" id="GO:0005484">
    <property type="term" value="F:SNAP receptor activity"/>
    <property type="evidence" value="ECO:0000318"/>
    <property type="project" value="GO_Central"/>
</dbReference>
<dbReference type="GO" id="GO:0000149">
    <property type="term" value="F:SNARE binding"/>
    <property type="evidence" value="ECO:0000318"/>
    <property type="project" value="GO_Central"/>
</dbReference>
<dbReference type="GO" id="GO:0006888">
    <property type="term" value="P:endoplasmic reticulum to Golgi vesicle-mediated transport"/>
    <property type="evidence" value="ECO:0000318"/>
    <property type="project" value="GO_Central"/>
</dbReference>
<dbReference type="GO" id="GO:0006886">
    <property type="term" value="P:intracellular protein transport"/>
    <property type="evidence" value="ECO:0000266"/>
    <property type="project" value="PomBase"/>
</dbReference>
<dbReference type="GO" id="GO:0006906">
    <property type="term" value="P:vesicle fusion"/>
    <property type="evidence" value="ECO:0000318"/>
    <property type="project" value="GO_Central"/>
</dbReference>
<dbReference type="CDD" id="cd15863">
    <property type="entry name" value="SNARE_GS27"/>
    <property type="match status" value="1"/>
</dbReference>
<dbReference type="InterPro" id="IPR027027">
    <property type="entry name" value="GOSR2/Membrin/Bos1"/>
</dbReference>
<dbReference type="PANTHER" id="PTHR21230:SF1">
    <property type="entry name" value="GOLGI SNAP RECEPTOR COMPLEX MEMBER 2"/>
    <property type="match status" value="1"/>
</dbReference>
<dbReference type="PANTHER" id="PTHR21230">
    <property type="entry name" value="VESICLE TRANSPORT V-SNARE PROTEIN VTI1-RELATED"/>
    <property type="match status" value="1"/>
</dbReference>
<dbReference type="Pfam" id="PF12352">
    <property type="entry name" value="V-SNARE_C"/>
    <property type="match status" value="1"/>
</dbReference>
<dbReference type="PIRSF" id="PIRSF028865">
    <property type="entry name" value="Membrin-2"/>
    <property type="match status" value="1"/>
</dbReference>
<organism>
    <name type="scientific">Schizosaccharomyces pombe (strain 972 / ATCC 24843)</name>
    <name type="common">Fission yeast</name>
    <dbReference type="NCBI Taxonomy" id="284812"/>
    <lineage>
        <taxon>Eukaryota</taxon>
        <taxon>Fungi</taxon>
        <taxon>Dikarya</taxon>
        <taxon>Ascomycota</taxon>
        <taxon>Taphrinomycotina</taxon>
        <taxon>Schizosaccharomycetes</taxon>
        <taxon>Schizosaccharomycetales</taxon>
        <taxon>Schizosaccharomycetaceae</taxon>
        <taxon>Schizosaccharomyces</taxon>
    </lineage>
</organism>
<protein>
    <recommendedName>
        <fullName>Protein transport protein bos1</fullName>
    </recommendedName>
</protein>
<comment type="function">
    <text evidence="1">SNARE required for targeting and fusion of ER-derived transport vesicles with the Golgi complex.</text>
</comment>
<comment type="subunit">
    <text evidence="1">Component of a SNARE complex consisting of sed5, bos1, bet1 and sec22 or ykt6. Interacts with YIF1 and YIP1 (By similarity).</text>
</comment>
<comment type="subcellular location">
    <subcellularLocation>
        <location evidence="1">Golgi apparatus membrane</location>
        <topology evidence="1">Single-pass type IV membrane protein</topology>
    </subcellularLocation>
    <subcellularLocation>
        <location evidence="1">Endoplasmic reticulum membrane</location>
        <topology evidence="1">Single-pass type IV membrane protein</topology>
    </subcellularLocation>
</comment>
<comment type="similarity">
    <text evidence="3">Belongs to the BOS1 family.</text>
</comment>
<sequence length="235" mass="26855">MSNTLYNHCTKLFQSIQRSLDELERGVQDESNTISLAGIQGQISASFLSLSRSIDDYDSMVQRELVPAKKKKATIRIQEFRQKHVQLLEKFDELKAHVRDIAQAKNRKELLGRRGYVNSLDSPYGNSTTDAEIVEGPSDLSRQDGLLKEHDFLGRAESQVDEFLERGRMILGDLVEQGSVLKATKTKVLNAANTLGITRHTLSLINRRSKQDKIIFYCGAFLVFVLFYLIYRWLR</sequence>
<feature type="chain" id="PRO_0000207555" description="Protein transport protein bos1">
    <location>
        <begin position="1"/>
        <end position="235"/>
    </location>
</feature>
<feature type="topological domain" description="Cytoplasmic" evidence="2">
    <location>
        <begin position="1"/>
        <end position="213"/>
    </location>
</feature>
<feature type="transmembrane region" description="Helical; Anchor for type IV membrane protein" evidence="2">
    <location>
        <begin position="214"/>
        <end position="234"/>
    </location>
</feature>
<feature type="topological domain" description="Vesicular" evidence="2">
    <location>
        <position position="235"/>
    </location>
</feature>
<keyword id="KW-0256">Endoplasmic reticulum</keyword>
<keyword id="KW-0931">ER-Golgi transport</keyword>
<keyword id="KW-0333">Golgi apparatus</keyword>
<keyword id="KW-0472">Membrane</keyword>
<keyword id="KW-0653">Protein transport</keyword>
<keyword id="KW-1185">Reference proteome</keyword>
<keyword id="KW-0812">Transmembrane</keyword>
<keyword id="KW-1133">Transmembrane helix</keyword>
<keyword id="KW-0813">Transport</keyword>
<accession>Q9P7G5</accession>
<evidence type="ECO:0000250" key="1"/>
<evidence type="ECO:0000255" key="2"/>
<evidence type="ECO:0000305" key="3"/>
<proteinExistence type="inferred from homology"/>
<name>BOS1_SCHPO</name>